<keyword id="KW-1185">Reference proteome</keyword>
<keyword id="KW-0687">Ribonucleoprotein</keyword>
<keyword id="KW-0689">Ribosomal protein</keyword>
<evidence type="ECO:0000255" key="1">
    <source>
        <dbReference type="HAMAP-Rule" id="MF_00294"/>
    </source>
</evidence>
<evidence type="ECO:0000305" key="2"/>
<protein>
    <recommendedName>
        <fullName evidence="1">Large ribosomal subunit protein bL33</fullName>
    </recommendedName>
    <alternativeName>
        <fullName evidence="2">50S ribosomal protein L33</fullName>
    </alternativeName>
</protein>
<sequence>MAKETREIIYLFSSTGNGHFYTTTKNKRSHPEKIKLKKFDPIIKKHITYTEKK</sequence>
<dbReference type="EMBL" id="BX248583">
    <property type="protein sequence ID" value="CAD83286.1"/>
    <property type="molecule type" value="Genomic_DNA"/>
</dbReference>
<dbReference type="SMR" id="Q7VRK2"/>
<dbReference type="STRING" id="203907.Bfl611"/>
<dbReference type="KEGG" id="bfl:Bfl611"/>
<dbReference type="eggNOG" id="COG0267">
    <property type="taxonomic scope" value="Bacteria"/>
</dbReference>
<dbReference type="HOGENOM" id="CLU_190949_1_1_6"/>
<dbReference type="OrthoDB" id="21586at2"/>
<dbReference type="Proteomes" id="UP000002192">
    <property type="component" value="Chromosome"/>
</dbReference>
<dbReference type="GO" id="GO:0022625">
    <property type="term" value="C:cytosolic large ribosomal subunit"/>
    <property type="evidence" value="ECO:0007669"/>
    <property type="project" value="TreeGrafter"/>
</dbReference>
<dbReference type="GO" id="GO:0003735">
    <property type="term" value="F:structural constituent of ribosome"/>
    <property type="evidence" value="ECO:0007669"/>
    <property type="project" value="InterPro"/>
</dbReference>
<dbReference type="GO" id="GO:0006412">
    <property type="term" value="P:translation"/>
    <property type="evidence" value="ECO:0007669"/>
    <property type="project" value="UniProtKB-UniRule"/>
</dbReference>
<dbReference type="Gene3D" id="2.20.28.120">
    <property type="entry name" value="Ribosomal protein L33"/>
    <property type="match status" value="1"/>
</dbReference>
<dbReference type="HAMAP" id="MF_00294">
    <property type="entry name" value="Ribosomal_bL33"/>
    <property type="match status" value="1"/>
</dbReference>
<dbReference type="InterPro" id="IPR001705">
    <property type="entry name" value="Ribosomal_bL33"/>
</dbReference>
<dbReference type="InterPro" id="IPR038584">
    <property type="entry name" value="Ribosomal_bL33_sf"/>
</dbReference>
<dbReference type="InterPro" id="IPR011332">
    <property type="entry name" value="Ribosomal_zn-bd"/>
</dbReference>
<dbReference type="NCBIfam" id="NF001860">
    <property type="entry name" value="PRK00595.1"/>
    <property type="match status" value="1"/>
</dbReference>
<dbReference type="NCBIfam" id="TIGR01023">
    <property type="entry name" value="rpmG_bact"/>
    <property type="match status" value="1"/>
</dbReference>
<dbReference type="PANTHER" id="PTHR15238">
    <property type="entry name" value="54S RIBOSOMAL PROTEIN L39, MITOCHONDRIAL"/>
    <property type="match status" value="1"/>
</dbReference>
<dbReference type="PANTHER" id="PTHR15238:SF1">
    <property type="entry name" value="LARGE RIBOSOMAL SUBUNIT PROTEIN BL33M"/>
    <property type="match status" value="1"/>
</dbReference>
<dbReference type="Pfam" id="PF00471">
    <property type="entry name" value="Ribosomal_L33"/>
    <property type="match status" value="1"/>
</dbReference>
<dbReference type="SUPFAM" id="SSF57829">
    <property type="entry name" value="Zn-binding ribosomal proteins"/>
    <property type="match status" value="1"/>
</dbReference>
<organism>
    <name type="scientific">Blochmanniella floridana</name>
    <dbReference type="NCBI Taxonomy" id="203907"/>
    <lineage>
        <taxon>Bacteria</taxon>
        <taxon>Pseudomonadati</taxon>
        <taxon>Pseudomonadota</taxon>
        <taxon>Gammaproteobacteria</taxon>
        <taxon>Enterobacterales</taxon>
        <taxon>Enterobacteriaceae</taxon>
        <taxon>ant endosymbionts</taxon>
        <taxon>Candidatus Blochmanniella</taxon>
    </lineage>
</organism>
<feature type="chain" id="PRO_1000004149" description="Large ribosomal subunit protein bL33">
    <location>
        <begin position="1"/>
        <end position="53"/>
    </location>
</feature>
<reference key="1">
    <citation type="journal article" date="2003" name="Proc. Natl. Acad. Sci. U.S.A.">
        <title>The genome sequence of Blochmannia floridanus: comparative analysis of reduced genomes.</title>
        <authorList>
            <person name="Gil R."/>
            <person name="Silva F.J."/>
            <person name="Zientz E."/>
            <person name="Delmotte F."/>
            <person name="Gonzalez-Candelas F."/>
            <person name="Latorre A."/>
            <person name="Rausell C."/>
            <person name="Kamerbeek J."/>
            <person name="Gadau J."/>
            <person name="Hoelldobler B."/>
            <person name="van Ham R.C.H.J."/>
            <person name="Gross R."/>
            <person name="Moya A."/>
        </authorList>
    </citation>
    <scope>NUCLEOTIDE SEQUENCE [LARGE SCALE GENOMIC DNA]</scope>
</reference>
<gene>
    <name evidence="1" type="primary">rpmG</name>
    <name type="ordered locus">Bfl611</name>
</gene>
<proteinExistence type="inferred from homology"/>
<accession>Q7VRK2</accession>
<comment type="similarity">
    <text evidence="1">Belongs to the bacterial ribosomal protein bL33 family.</text>
</comment>
<name>RL33_BLOFL</name>